<protein>
    <recommendedName>
        <fullName>Myeloid leukemia factor</fullName>
    </recommendedName>
    <alternativeName>
        <fullName>Myelodysplasia-myeloid leukemia factor</fullName>
        <shortName>dMLF</shortName>
    </alternativeName>
</protein>
<gene>
    <name type="primary">Mlf</name>
    <name type="ORF">CG8295</name>
</gene>
<feature type="chain" id="PRO_0000220756" description="Myeloid leukemia factor">
    <location>
        <begin position="1"/>
        <end position="376"/>
    </location>
</feature>
<feature type="region of interest" description="Interaction with DREF" evidence="2">
    <location>
        <begin position="96"/>
        <end position="202"/>
    </location>
</feature>
<feature type="region of interest" description="Disordered" evidence="1">
    <location>
        <begin position="124"/>
        <end position="147"/>
    </location>
</feature>
<feature type="region of interest" description="Disordered" evidence="1">
    <location>
        <begin position="187"/>
        <end position="224"/>
    </location>
</feature>
<feature type="region of interest" description="Disordered" evidence="1">
    <location>
        <begin position="250"/>
        <end position="376"/>
    </location>
</feature>
<feature type="compositionally biased region" description="Polar residues" evidence="1">
    <location>
        <begin position="262"/>
        <end position="273"/>
    </location>
</feature>
<feature type="compositionally biased region" description="Low complexity" evidence="1">
    <location>
        <begin position="274"/>
        <end position="318"/>
    </location>
</feature>
<feature type="modified residue" description="Phosphothreonine" evidence="3">
    <location>
        <position position="323"/>
    </location>
</feature>
<feature type="splice variant" id="VSP_026174" description="In isoform C." evidence="7">
    <original>SLFGALMGDFDDDLGLMN</original>
    <variation>KQKRKSKSNRSQMELH</variation>
    <location>
        <begin position="2"/>
        <end position="19"/>
    </location>
</feature>
<feature type="splice variant" id="VSP_026175" description="In isoform B." evidence="5">
    <original>SGNI</original>
    <variation>RYNY</variation>
    <location>
        <begin position="270"/>
        <end position="273"/>
    </location>
</feature>
<feature type="splice variant" id="VSP_026176" description="In isoform A." evidence="4 6">
    <location>
        <begin position="271"/>
        <end position="337"/>
    </location>
</feature>
<feature type="splice variant" id="VSP_026177" description="In isoform B." evidence="5">
    <location>
        <begin position="274"/>
        <end position="376"/>
    </location>
</feature>
<feature type="sequence conflict" description="In Ref. 5; AAN71684." evidence="7" ref="5">
    <original>R</original>
    <variation>K</variation>
    <location>
        <position position="139"/>
    </location>
</feature>
<feature type="sequence conflict" description="In Ref. 5; AAN71684." evidence="7" ref="5">
    <original>S</original>
    <variation>T</variation>
    <location>
        <position position="262"/>
    </location>
</feature>
<feature type="sequence conflict" description="In Ref. 5; AAN71684." evidence="7" ref="5">
    <original>F</original>
    <variation>Y</variation>
    <location>
        <position position="357"/>
    </location>
</feature>
<sequence>MSLFGALMGDFDDDLGLMNNHMNHTMNAMNMQMRSMNRLMNSFMPDPFMQVSPFDQGFQQNALMERPQMPAMPAMGLFGMPMMPNFNRLLNADIGGNSGASFCQSTVMTMSSGPDGRPQIYQASTSTKTGPGGVRETRRTVQDSRTGVKKMAIGHHIGERAHIIEKEQDMRSGQLEERQEFINLEEGEAEQFDREFTSRASRGAVQSRHHAGGMQAIMPARPAAHTSTLTIEPVEDDDDDDDDCVIQEQQPVRSSAGRHYSSAPTAPQNSGNIATAAAPTPTSSPTTYDTSNGNNNNYVSSRRSYLRNGHGHSLATPRRPLRTPPSSPLATVSTSPSIHPHPYAANPRRQQRAVKHFHTEDEAASSYKAVKRGKKK</sequence>
<organism>
    <name type="scientific">Drosophila melanogaster</name>
    <name type="common">Fruit fly</name>
    <dbReference type="NCBI Taxonomy" id="7227"/>
    <lineage>
        <taxon>Eukaryota</taxon>
        <taxon>Metazoa</taxon>
        <taxon>Ecdysozoa</taxon>
        <taxon>Arthropoda</taxon>
        <taxon>Hexapoda</taxon>
        <taxon>Insecta</taxon>
        <taxon>Pterygota</taxon>
        <taxon>Neoptera</taxon>
        <taxon>Endopterygota</taxon>
        <taxon>Diptera</taxon>
        <taxon>Brachycera</taxon>
        <taxon>Muscomorpha</taxon>
        <taxon>Ephydroidea</taxon>
        <taxon>Drosophilidae</taxon>
        <taxon>Drosophila</taxon>
        <taxon>Sophophora</taxon>
    </lineage>
</organism>
<reference key="1">
    <citation type="journal article" date="2000" name="Gene">
        <title>Characterization of a Drosophila homologue of the human myelodysplasia/myeloid leukemia factor (MLF).</title>
        <authorList>
            <person name="Ohno K."/>
            <person name="Takahashi Y."/>
            <person name="Hirose F."/>
            <person name="Inoue Y.H."/>
            <person name="Taguchi O."/>
            <person name="Nishida Y."/>
            <person name="Matsukage A."/>
            <person name="Yamaguchi M."/>
        </authorList>
    </citation>
    <scope>NUCLEOTIDE SEQUENCE [MRNA] (ISOFORM A)</scope>
    <scope>INTERACTION WITH DREF</scope>
    <scope>SUBCELLULAR LOCATION</scope>
    <scope>TISSUE SPECIFICITY</scope>
    <scope>DEVELOPMENTAL STAGE</scope>
</reference>
<reference key="2">
    <citation type="journal article" date="2002" name="Hum. Mol. Genet.">
        <title>Suppression of polyglutamine toxicity by a Drosophila homolog of myeloid leukemia factor 1.</title>
        <authorList>
            <person name="Kazemi-Esfarjani P."/>
            <person name="Benzer S."/>
        </authorList>
    </citation>
    <scope>NUCLEOTIDE SEQUENCE [MRNA] (ISOFORM B)</scope>
    <source>
        <tissue>Head</tissue>
    </source>
</reference>
<reference key="3">
    <citation type="journal article" date="2000" name="Science">
        <title>The genome sequence of Drosophila melanogaster.</title>
        <authorList>
            <person name="Adams M.D."/>
            <person name="Celniker S.E."/>
            <person name="Holt R.A."/>
            <person name="Evans C.A."/>
            <person name="Gocayne J.D."/>
            <person name="Amanatides P.G."/>
            <person name="Scherer S.E."/>
            <person name="Li P.W."/>
            <person name="Hoskins R.A."/>
            <person name="Galle R.F."/>
            <person name="George R.A."/>
            <person name="Lewis S.E."/>
            <person name="Richards S."/>
            <person name="Ashburner M."/>
            <person name="Henderson S.N."/>
            <person name="Sutton G.G."/>
            <person name="Wortman J.R."/>
            <person name="Yandell M.D."/>
            <person name="Zhang Q."/>
            <person name="Chen L.X."/>
            <person name="Brandon R.C."/>
            <person name="Rogers Y.-H.C."/>
            <person name="Blazej R.G."/>
            <person name="Champe M."/>
            <person name="Pfeiffer B.D."/>
            <person name="Wan K.H."/>
            <person name="Doyle C."/>
            <person name="Baxter E.G."/>
            <person name="Helt G."/>
            <person name="Nelson C.R."/>
            <person name="Miklos G.L.G."/>
            <person name="Abril J.F."/>
            <person name="Agbayani A."/>
            <person name="An H.-J."/>
            <person name="Andrews-Pfannkoch C."/>
            <person name="Baldwin D."/>
            <person name="Ballew R.M."/>
            <person name="Basu A."/>
            <person name="Baxendale J."/>
            <person name="Bayraktaroglu L."/>
            <person name="Beasley E.M."/>
            <person name="Beeson K.Y."/>
            <person name="Benos P.V."/>
            <person name="Berman B.P."/>
            <person name="Bhandari D."/>
            <person name="Bolshakov S."/>
            <person name="Borkova D."/>
            <person name="Botchan M.R."/>
            <person name="Bouck J."/>
            <person name="Brokstein P."/>
            <person name="Brottier P."/>
            <person name="Burtis K.C."/>
            <person name="Busam D.A."/>
            <person name="Butler H."/>
            <person name="Cadieu E."/>
            <person name="Center A."/>
            <person name="Chandra I."/>
            <person name="Cherry J.M."/>
            <person name="Cawley S."/>
            <person name="Dahlke C."/>
            <person name="Davenport L.B."/>
            <person name="Davies P."/>
            <person name="de Pablos B."/>
            <person name="Delcher A."/>
            <person name="Deng Z."/>
            <person name="Mays A.D."/>
            <person name="Dew I."/>
            <person name="Dietz S.M."/>
            <person name="Dodson K."/>
            <person name="Doup L.E."/>
            <person name="Downes M."/>
            <person name="Dugan-Rocha S."/>
            <person name="Dunkov B.C."/>
            <person name="Dunn P."/>
            <person name="Durbin K.J."/>
            <person name="Evangelista C.C."/>
            <person name="Ferraz C."/>
            <person name="Ferriera S."/>
            <person name="Fleischmann W."/>
            <person name="Fosler C."/>
            <person name="Gabrielian A.E."/>
            <person name="Garg N.S."/>
            <person name="Gelbart W.M."/>
            <person name="Glasser K."/>
            <person name="Glodek A."/>
            <person name="Gong F."/>
            <person name="Gorrell J.H."/>
            <person name="Gu Z."/>
            <person name="Guan P."/>
            <person name="Harris M."/>
            <person name="Harris N.L."/>
            <person name="Harvey D.A."/>
            <person name="Heiman T.J."/>
            <person name="Hernandez J.R."/>
            <person name="Houck J."/>
            <person name="Hostin D."/>
            <person name="Houston K.A."/>
            <person name="Howland T.J."/>
            <person name="Wei M.-H."/>
            <person name="Ibegwam C."/>
            <person name="Jalali M."/>
            <person name="Kalush F."/>
            <person name="Karpen G.H."/>
            <person name="Ke Z."/>
            <person name="Kennison J.A."/>
            <person name="Ketchum K.A."/>
            <person name="Kimmel B.E."/>
            <person name="Kodira C.D."/>
            <person name="Kraft C.L."/>
            <person name="Kravitz S."/>
            <person name="Kulp D."/>
            <person name="Lai Z."/>
            <person name="Lasko P."/>
            <person name="Lei Y."/>
            <person name="Levitsky A.A."/>
            <person name="Li J.H."/>
            <person name="Li Z."/>
            <person name="Liang Y."/>
            <person name="Lin X."/>
            <person name="Liu X."/>
            <person name="Mattei B."/>
            <person name="McIntosh T.C."/>
            <person name="McLeod M.P."/>
            <person name="McPherson D."/>
            <person name="Merkulov G."/>
            <person name="Milshina N.V."/>
            <person name="Mobarry C."/>
            <person name="Morris J."/>
            <person name="Moshrefi A."/>
            <person name="Mount S.M."/>
            <person name="Moy M."/>
            <person name="Murphy B."/>
            <person name="Murphy L."/>
            <person name="Muzny D.M."/>
            <person name="Nelson D.L."/>
            <person name="Nelson D.R."/>
            <person name="Nelson K.A."/>
            <person name="Nixon K."/>
            <person name="Nusskern D.R."/>
            <person name="Pacleb J.M."/>
            <person name="Palazzolo M."/>
            <person name="Pittman G.S."/>
            <person name="Pan S."/>
            <person name="Pollard J."/>
            <person name="Puri V."/>
            <person name="Reese M.G."/>
            <person name="Reinert K."/>
            <person name="Remington K."/>
            <person name="Saunders R.D.C."/>
            <person name="Scheeler F."/>
            <person name="Shen H."/>
            <person name="Shue B.C."/>
            <person name="Siden-Kiamos I."/>
            <person name="Simpson M."/>
            <person name="Skupski M.P."/>
            <person name="Smith T.J."/>
            <person name="Spier E."/>
            <person name="Spradling A.C."/>
            <person name="Stapleton M."/>
            <person name="Strong R."/>
            <person name="Sun E."/>
            <person name="Svirskas R."/>
            <person name="Tector C."/>
            <person name="Turner R."/>
            <person name="Venter E."/>
            <person name="Wang A.H."/>
            <person name="Wang X."/>
            <person name="Wang Z.-Y."/>
            <person name="Wassarman D.A."/>
            <person name="Weinstock G.M."/>
            <person name="Weissenbach J."/>
            <person name="Williams S.M."/>
            <person name="Woodage T."/>
            <person name="Worley K.C."/>
            <person name="Wu D."/>
            <person name="Yang S."/>
            <person name="Yao Q.A."/>
            <person name="Ye J."/>
            <person name="Yeh R.-F."/>
            <person name="Zaveri J.S."/>
            <person name="Zhan M."/>
            <person name="Zhang G."/>
            <person name="Zhao Q."/>
            <person name="Zheng L."/>
            <person name="Zheng X.H."/>
            <person name="Zhong F.N."/>
            <person name="Zhong W."/>
            <person name="Zhou X."/>
            <person name="Zhu S.C."/>
            <person name="Zhu X."/>
            <person name="Smith H.O."/>
            <person name="Gibbs R.A."/>
            <person name="Myers E.W."/>
            <person name="Rubin G.M."/>
            <person name="Venter J.C."/>
        </authorList>
    </citation>
    <scope>NUCLEOTIDE SEQUENCE [LARGE SCALE GENOMIC DNA]</scope>
    <source>
        <strain>Berkeley</strain>
    </source>
</reference>
<reference key="4">
    <citation type="journal article" date="2002" name="Genome Biol.">
        <title>Annotation of the Drosophila melanogaster euchromatic genome: a systematic review.</title>
        <authorList>
            <person name="Misra S."/>
            <person name="Crosby M.A."/>
            <person name="Mungall C.J."/>
            <person name="Matthews B.B."/>
            <person name="Campbell K.S."/>
            <person name="Hradecky P."/>
            <person name="Huang Y."/>
            <person name="Kaminker J.S."/>
            <person name="Millburn G.H."/>
            <person name="Prochnik S.E."/>
            <person name="Smith C.D."/>
            <person name="Tupy J.L."/>
            <person name="Whitfield E.J."/>
            <person name="Bayraktaroglu L."/>
            <person name="Berman B.P."/>
            <person name="Bettencourt B.R."/>
            <person name="Celniker S.E."/>
            <person name="de Grey A.D.N.J."/>
            <person name="Drysdale R.A."/>
            <person name="Harris N.L."/>
            <person name="Richter J."/>
            <person name="Russo S."/>
            <person name="Schroeder A.J."/>
            <person name="Shu S.Q."/>
            <person name="Stapleton M."/>
            <person name="Yamada C."/>
            <person name="Ashburner M."/>
            <person name="Gelbart W.M."/>
            <person name="Rubin G.M."/>
            <person name="Lewis S.E."/>
        </authorList>
    </citation>
    <scope>GENOME REANNOTATION</scope>
    <scope>ALTERNATIVE SPLICING</scope>
    <source>
        <strain>Berkeley</strain>
    </source>
</reference>
<reference key="5">
    <citation type="journal article" date="2002" name="Genome Biol.">
        <title>A Drosophila full-length cDNA resource.</title>
        <authorList>
            <person name="Stapleton M."/>
            <person name="Carlson J.W."/>
            <person name="Brokstein P."/>
            <person name="Yu C."/>
            <person name="Champe M."/>
            <person name="George R.A."/>
            <person name="Guarin H."/>
            <person name="Kronmiller B."/>
            <person name="Pacleb J.M."/>
            <person name="Park S."/>
            <person name="Wan K.H."/>
            <person name="Rubin G.M."/>
            <person name="Celniker S.E."/>
        </authorList>
    </citation>
    <scope>NUCLEOTIDE SEQUENCE [LARGE SCALE MRNA] (ISOFORM A)</scope>
    <source>
        <strain>Berkeley</strain>
        <tissue>Embryo</tissue>
    </source>
</reference>
<reference key="6">
    <citation type="journal article" date="2008" name="J. Proteome Res.">
        <title>Phosphoproteome analysis of Drosophila melanogaster embryos.</title>
        <authorList>
            <person name="Zhai B."/>
            <person name="Villen J."/>
            <person name="Beausoleil S.A."/>
            <person name="Mintseris J."/>
            <person name="Gygi S.P."/>
        </authorList>
    </citation>
    <scope>PHOSPHORYLATION [LARGE SCALE ANALYSIS] AT THR-323</scope>
    <scope>IDENTIFICATION BY MASS SPECTROMETRY</scope>
    <source>
        <tissue>Embryo</tissue>
    </source>
</reference>
<comment type="subunit">
    <text evidence="2">Interacts with DRE-binding factor Dref.</text>
</comment>
<comment type="subcellular location">
    <subcellularLocation>
        <location evidence="2">Cytoplasm</location>
    </subcellularLocation>
</comment>
<comment type="alternative products">
    <event type="alternative splicing"/>
    <isoform>
        <id>Q9NKV0-1</id>
        <name>D</name>
        <sequence type="displayed"/>
    </isoform>
    <isoform>
        <id>Q9NKV0-2</id>
        <name>A</name>
        <sequence type="described" ref="VSP_026176"/>
    </isoform>
    <isoform>
        <id>Q9NKV0-3</id>
        <name>B</name>
        <sequence type="described" ref="VSP_026175 VSP_026177"/>
    </isoform>
    <isoform>
        <id>Q9NKV0-4</id>
        <name>C</name>
        <sequence type="described" ref="VSP_026174"/>
    </isoform>
</comment>
<comment type="tissue specificity">
    <text evidence="2">Expressed at high levels in unfertilized eggs, early embryos, pupae and adult males while a low level expression is found in adult females and larvae.</text>
</comment>
<comment type="developmental stage">
    <text evidence="2">High levels are seen in unfertilized eggs and expression increases slightly during early embryo stages (2-3 hours). Levels are high in embryos until 4 hours after fertilization and then decrease gradually through embryonic and larval stages.</text>
</comment>
<comment type="similarity">
    <text evidence="7">Belongs to the MLF family.</text>
</comment>
<accession>Q9NKV0</accession>
<accession>A1ZA61</accession>
<accession>A1ZA62</accession>
<accession>Q540Y3</accession>
<accession>Q8IG90</accession>
<accession>Q95P43</accession>
<accession>Q9V7G3</accession>
<evidence type="ECO:0000256" key="1">
    <source>
        <dbReference type="SAM" id="MobiDB-lite"/>
    </source>
</evidence>
<evidence type="ECO:0000269" key="2">
    <source>
    </source>
</evidence>
<evidence type="ECO:0000269" key="3">
    <source>
    </source>
</evidence>
<evidence type="ECO:0000303" key="4">
    <source>
    </source>
</evidence>
<evidence type="ECO:0000303" key="5">
    <source>
    </source>
</evidence>
<evidence type="ECO:0000303" key="6">
    <source>
    </source>
</evidence>
<evidence type="ECO:0000305" key="7"/>
<keyword id="KW-0025">Alternative splicing</keyword>
<keyword id="KW-0963">Cytoplasm</keyword>
<keyword id="KW-0597">Phosphoprotein</keyword>
<keyword id="KW-1185">Reference proteome</keyword>
<dbReference type="EMBL" id="AB043986">
    <property type="protein sequence ID" value="BAA96391.1"/>
    <property type="molecule type" value="mRNA"/>
</dbReference>
<dbReference type="EMBL" id="AY037049">
    <property type="protein sequence ID" value="AAK63191.1"/>
    <property type="molecule type" value="mRNA"/>
</dbReference>
<dbReference type="EMBL" id="AE013599">
    <property type="protein sequence ID" value="AAF58093.2"/>
    <property type="molecule type" value="Genomic_DNA"/>
</dbReference>
<dbReference type="EMBL" id="AE013599">
    <property type="protein sequence ID" value="AAS64849.1"/>
    <property type="molecule type" value="Genomic_DNA"/>
</dbReference>
<dbReference type="EMBL" id="AE013599">
    <property type="protein sequence ID" value="AAM70968.2"/>
    <property type="molecule type" value="Genomic_DNA"/>
</dbReference>
<dbReference type="EMBL" id="AE013599">
    <property type="protein sequence ID" value="AAM70969.1"/>
    <property type="molecule type" value="Genomic_DNA"/>
</dbReference>
<dbReference type="EMBL" id="AY118583">
    <property type="protein sequence ID" value="AAM49952.1"/>
    <property type="molecule type" value="mRNA"/>
</dbReference>
<dbReference type="EMBL" id="BT001895">
    <property type="protein sequence ID" value="AAN71684.1"/>
    <property type="molecule type" value="mRNA"/>
</dbReference>
<dbReference type="RefSeq" id="NP_523753.1">
    <molecule id="Q9NKV0-2"/>
    <property type="nucleotide sequence ID" value="NM_079029.5"/>
</dbReference>
<dbReference type="RefSeq" id="NP_725501.2">
    <molecule id="Q9NKV0-4"/>
    <property type="nucleotide sequence ID" value="NM_166122.4"/>
</dbReference>
<dbReference type="RefSeq" id="NP_725502.1">
    <molecule id="Q9NKV0-3"/>
    <property type="nucleotide sequence ID" value="NM_166123.4"/>
</dbReference>
<dbReference type="RefSeq" id="NP_995847.1">
    <molecule id="Q9NKV0-1"/>
    <property type="nucleotide sequence ID" value="NM_206125.2"/>
</dbReference>
<dbReference type="BioGRID" id="62477">
    <property type="interactions" value="14"/>
</dbReference>
<dbReference type="FunCoup" id="Q9NKV0">
    <property type="interactions" value="36"/>
</dbReference>
<dbReference type="IntAct" id="Q9NKV0">
    <property type="interactions" value="3"/>
</dbReference>
<dbReference type="STRING" id="7227.FBpp0089346"/>
<dbReference type="GlyGen" id="Q9NKV0">
    <property type="glycosylation" value="2 sites"/>
</dbReference>
<dbReference type="iPTMnet" id="Q9NKV0"/>
<dbReference type="PaxDb" id="7227-FBpp0089346"/>
<dbReference type="DNASU" id="36750"/>
<dbReference type="EnsemblMetazoa" id="FBtr0087292">
    <molecule id="Q9NKV0-2"/>
    <property type="protein sequence ID" value="FBpp0086428"/>
    <property type="gene ID" value="FBgn0034051"/>
</dbReference>
<dbReference type="EnsemblMetazoa" id="FBtr0087293">
    <molecule id="Q9NKV0-3"/>
    <property type="protein sequence ID" value="FBpp0086429"/>
    <property type="gene ID" value="FBgn0034051"/>
</dbReference>
<dbReference type="EnsemblMetazoa" id="FBtr0087294">
    <molecule id="Q9NKV0-4"/>
    <property type="protein sequence ID" value="FBpp0086430"/>
    <property type="gene ID" value="FBgn0034051"/>
</dbReference>
<dbReference type="EnsemblMetazoa" id="FBtr0087295">
    <molecule id="Q9NKV0-1"/>
    <property type="protein sequence ID" value="FBpp0089346"/>
    <property type="gene ID" value="FBgn0034051"/>
</dbReference>
<dbReference type="GeneID" id="36750"/>
<dbReference type="KEGG" id="dme:Dmel_CG8295"/>
<dbReference type="AGR" id="FB:FBgn0034051"/>
<dbReference type="CTD" id="36750"/>
<dbReference type="FlyBase" id="FBgn0034051">
    <property type="gene designation" value="Mlf"/>
</dbReference>
<dbReference type="VEuPathDB" id="VectorBase:FBgn0034051"/>
<dbReference type="eggNOG" id="KOG4049">
    <property type="taxonomic scope" value="Eukaryota"/>
</dbReference>
<dbReference type="GeneTree" id="ENSGT00390000005023"/>
<dbReference type="InParanoid" id="Q9NKV0"/>
<dbReference type="OMA" id="HHHTENG"/>
<dbReference type="OrthoDB" id="8707547at2759"/>
<dbReference type="PhylomeDB" id="Q9NKV0"/>
<dbReference type="BioGRID-ORCS" id="36750">
    <property type="hits" value="0 hits in 3 CRISPR screens"/>
</dbReference>
<dbReference type="ChiTaRS" id="Mlf">
    <property type="organism name" value="fly"/>
</dbReference>
<dbReference type="GenomeRNAi" id="36750"/>
<dbReference type="PRO" id="PR:Q9NKV0"/>
<dbReference type="Proteomes" id="UP000000803">
    <property type="component" value="Chromosome 2R"/>
</dbReference>
<dbReference type="Bgee" id="FBgn0034051">
    <property type="expression patterns" value="Expressed in T neuron T5d (Drosophila) in embryonic/larval optic lobe (Drosophila) and 255 other cell types or tissues"/>
</dbReference>
<dbReference type="ExpressionAtlas" id="Q9NKV0">
    <property type="expression patterns" value="baseline and differential"/>
</dbReference>
<dbReference type="GO" id="GO:0005737">
    <property type="term" value="C:cytoplasm"/>
    <property type="evidence" value="ECO:0000314"/>
    <property type="project" value="FlyBase"/>
</dbReference>
<dbReference type="GO" id="GO:0005634">
    <property type="term" value="C:nucleus"/>
    <property type="evidence" value="ECO:0000314"/>
    <property type="project" value="FlyBase"/>
</dbReference>
<dbReference type="GO" id="GO:0048471">
    <property type="term" value="C:perinuclear region of cytoplasm"/>
    <property type="evidence" value="ECO:0000314"/>
    <property type="project" value="FlyBase"/>
</dbReference>
<dbReference type="GO" id="GO:0005705">
    <property type="term" value="C:polytene chromosome interband"/>
    <property type="evidence" value="ECO:0000314"/>
    <property type="project" value="FlyBase"/>
</dbReference>
<dbReference type="GO" id="GO:0140297">
    <property type="term" value="F:DNA-binding transcription factor binding"/>
    <property type="evidence" value="ECO:0000353"/>
    <property type="project" value="FlyBase"/>
</dbReference>
<dbReference type="GO" id="GO:0051087">
    <property type="term" value="F:protein-folding chaperone binding"/>
    <property type="evidence" value="ECO:0000353"/>
    <property type="project" value="FlyBase"/>
</dbReference>
<dbReference type="GO" id="GO:0042691">
    <property type="term" value="P:positive regulation of crystal cell differentiation"/>
    <property type="evidence" value="ECO:0000315"/>
    <property type="project" value="FlyBase"/>
</dbReference>
<dbReference type="GO" id="GO:0050821">
    <property type="term" value="P:protein stabilization"/>
    <property type="evidence" value="ECO:0000315"/>
    <property type="project" value="FlyBase"/>
</dbReference>
<dbReference type="GO" id="GO:2000495">
    <property type="term" value="P:regulation of cell proliferation involved in compound eye morphogenesis"/>
    <property type="evidence" value="ECO:0000270"/>
    <property type="project" value="FlyBase"/>
</dbReference>
<dbReference type="GO" id="GO:0006355">
    <property type="term" value="P:regulation of DNA-templated transcription"/>
    <property type="evidence" value="ECO:0000315"/>
    <property type="project" value="FlyBase"/>
</dbReference>
<dbReference type="InterPro" id="IPR019376">
    <property type="entry name" value="Myeloid_leukemia_factor"/>
</dbReference>
<dbReference type="PANTHER" id="PTHR13105">
    <property type="entry name" value="MYELOID LEUKEMIA FACTOR"/>
    <property type="match status" value="1"/>
</dbReference>
<dbReference type="Pfam" id="PF10248">
    <property type="entry name" value="Mlf1IP"/>
    <property type="match status" value="1"/>
</dbReference>
<proteinExistence type="evidence at protein level"/>
<name>MLF_DROME</name>